<feature type="chain" id="PRO_0000174904" description="Co-chaperonin GroES">
    <location>
        <begin position="1"/>
        <end position="95"/>
    </location>
</feature>
<sequence length="95" mass="9979">MSIKPLHDRVVVKPIEADEVSAGGIVIPDSAKEKSTKGEVVAIGAGKPLDNGSLRAPVVKVGDKVIYGQYAGSSYKSEGVEYKVLREDDILAVIG</sequence>
<comment type="function">
    <text evidence="1">Together with the chaperonin GroEL, plays an essential role in assisting protein folding. The GroEL-GroES system forms a nano-cage that allows encapsulation of the non-native substrate proteins and provides a physical environment optimized to promote and accelerate protein folding. GroES binds to the apical surface of the GroEL ring, thereby capping the opening of the GroEL channel.</text>
</comment>
<comment type="subunit">
    <text evidence="1">Heptamer of 7 subunits arranged in a ring. Interacts with the chaperonin GroEL.</text>
</comment>
<comment type="subcellular location">
    <subcellularLocation>
        <location evidence="1">Cytoplasm</location>
    </subcellularLocation>
</comment>
<comment type="similarity">
    <text evidence="1">Belongs to the GroES chaperonin family.</text>
</comment>
<reference key="1">
    <citation type="submission" date="2001-10" db="EMBL/GenBank/DDBJ databases">
        <authorList>
            <person name="Hsu C.-C."/>
            <person name="Yu Y.-J."/>
            <person name="Yang M.-T."/>
        </authorList>
    </citation>
    <scope>NUCLEOTIDE SEQUENCE [GENOMIC DNA]</scope>
</reference>
<dbReference type="EMBL" id="AF426387">
    <property type="protein sequence ID" value="AAL74149.1"/>
    <property type="molecule type" value="Genomic_DNA"/>
</dbReference>
<dbReference type="RefSeq" id="WP_003483210.1">
    <property type="nucleotide sequence ID" value="NZ_OCZD01000131.1"/>
</dbReference>
<dbReference type="SMR" id="P0A0R7"/>
<dbReference type="eggNOG" id="COG0234">
    <property type="taxonomic scope" value="Bacteria"/>
</dbReference>
<dbReference type="GO" id="GO:0005737">
    <property type="term" value="C:cytoplasm"/>
    <property type="evidence" value="ECO:0007669"/>
    <property type="project" value="UniProtKB-SubCell"/>
</dbReference>
<dbReference type="GO" id="GO:0005524">
    <property type="term" value="F:ATP binding"/>
    <property type="evidence" value="ECO:0007669"/>
    <property type="project" value="InterPro"/>
</dbReference>
<dbReference type="GO" id="GO:0046872">
    <property type="term" value="F:metal ion binding"/>
    <property type="evidence" value="ECO:0007669"/>
    <property type="project" value="TreeGrafter"/>
</dbReference>
<dbReference type="GO" id="GO:0044183">
    <property type="term" value="F:protein folding chaperone"/>
    <property type="evidence" value="ECO:0007669"/>
    <property type="project" value="InterPro"/>
</dbReference>
<dbReference type="GO" id="GO:0051087">
    <property type="term" value="F:protein-folding chaperone binding"/>
    <property type="evidence" value="ECO:0007669"/>
    <property type="project" value="TreeGrafter"/>
</dbReference>
<dbReference type="GO" id="GO:0051082">
    <property type="term" value="F:unfolded protein binding"/>
    <property type="evidence" value="ECO:0007669"/>
    <property type="project" value="TreeGrafter"/>
</dbReference>
<dbReference type="GO" id="GO:0051085">
    <property type="term" value="P:chaperone cofactor-dependent protein refolding"/>
    <property type="evidence" value="ECO:0007669"/>
    <property type="project" value="TreeGrafter"/>
</dbReference>
<dbReference type="CDD" id="cd00320">
    <property type="entry name" value="cpn10"/>
    <property type="match status" value="1"/>
</dbReference>
<dbReference type="FunFam" id="2.30.33.40:FF:000001">
    <property type="entry name" value="10 kDa chaperonin"/>
    <property type="match status" value="1"/>
</dbReference>
<dbReference type="Gene3D" id="2.30.33.40">
    <property type="entry name" value="GroES chaperonin"/>
    <property type="match status" value="1"/>
</dbReference>
<dbReference type="HAMAP" id="MF_00580">
    <property type="entry name" value="CH10"/>
    <property type="match status" value="1"/>
</dbReference>
<dbReference type="InterPro" id="IPR020818">
    <property type="entry name" value="Chaperonin_GroES"/>
</dbReference>
<dbReference type="InterPro" id="IPR037124">
    <property type="entry name" value="Chaperonin_GroES_sf"/>
</dbReference>
<dbReference type="InterPro" id="IPR018369">
    <property type="entry name" value="Chaprnonin_Cpn10_CS"/>
</dbReference>
<dbReference type="InterPro" id="IPR011032">
    <property type="entry name" value="GroES-like_sf"/>
</dbReference>
<dbReference type="NCBIfam" id="NF001527">
    <property type="entry name" value="PRK00364.1-2"/>
    <property type="match status" value="1"/>
</dbReference>
<dbReference type="NCBIfam" id="NF001531">
    <property type="entry name" value="PRK00364.2-2"/>
    <property type="match status" value="1"/>
</dbReference>
<dbReference type="NCBIfam" id="NF001533">
    <property type="entry name" value="PRK00364.2-4"/>
    <property type="match status" value="1"/>
</dbReference>
<dbReference type="PANTHER" id="PTHR10772">
    <property type="entry name" value="10 KDA HEAT SHOCK PROTEIN"/>
    <property type="match status" value="1"/>
</dbReference>
<dbReference type="PANTHER" id="PTHR10772:SF58">
    <property type="entry name" value="CO-CHAPERONIN GROES"/>
    <property type="match status" value="1"/>
</dbReference>
<dbReference type="Pfam" id="PF00166">
    <property type="entry name" value="Cpn10"/>
    <property type="match status" value="1"/>
</dbReference>
<dbReference type="PRINTS" id="PR00297">
    <property type="entry name" value="CHAPERONIN10"/>
</dbReference>
<dbReference type="SMART" id="SM00883">
    <property type="entry name" value="Cpn10"/>
    <property type="match status" value="1"/>
</dbReference>
<dbReference type="SUPFAM" id="SSF50129">
    <property type="entry name" value="GroES-like"/>
    <property type="match status" value="1"/>
</dbReference>
<dbReference type="PROSITE" id="PS00681">
    <property type="entry name" value="CHAPERONINS_CPN10"/>
    <property type="match status" value="1"/>
</dbReference>
<gene>
    <name evidence="1" type="primary">groES</name>
    <name evidence="1" type="synonym">groS</name>
</gene>
<organism>
    <name type="scientific">Xanthomonas campestris pv. phaseoli</name>
    <dbReference type="NCBI Taxonomy" id="317013"/>
    <lineage>
        <taxon>Bacteria</taxon>
        <taxon>Pseudomonadati</taxon>
        <taxon>Pseudomonadota</taxon>
        <taxon>Gammaproteobacteria</taxon>
        <taxon>Lysobacterales</taxon>
        <taxon>Lysobacteraceae</taxon>
        <taxon>Xanthomonas</taxon>
    </lineage>
</organism>
<evidence type="ECO:0000255" key="1">
    <source>
        <dbReference type="HAMAP-Rule" id="MF_00580"/>
    </source>
</evidence>
<keyword id="KW-0143">Chaperone</keyword>
<keyword id="KW-0963">Cytoplasm</keyword>
<proteinExistence type="inferred from homology"/>
<protein>
    <recommendedName>
        <fullName evidence="1">Co-chaperonin GroES</fullName>
    </recommendedName>
    <alternativeName>
        <fullName evidence="1">10 kDa chaperonin</fullName>
    </alternativeName>
    <alternativeName>
        <fullName evidence="1">Chaperonin-10</fullName>
        <shortName evidence="1">Cpn10</shortName>
    </alternativeName>
</protein>
<name>CH10_XANCH</name>
<accession>P0A0R7</accession>
<accession>Q8RIT8</accession>